<reference key="1">
    <citation type="submission" date="2005-06" db="EMBL/GenBank/DDBJ databases">
        <title>DNA sequences of macaque genes expressed in brain or testis and its evolutionary implications.</title>
        <authorList>
            <consortium name="International consortium for macaque cDNA sequencing and analysis"/>
        </authorList>
    </citation>
    <scope>NUCLEOTIDE SEQUENCE [LARGE SCALE MRNA]</scope>
    <source>
        <tissue>Testis</tissue>
    </source>
</reference>
<evidence type="ECO:0000255" key="1"/>
<evidence type="ECO:0000256" key="2">
    <source>
        <dbReference type="SAM" id="MobiDB-lite"/>
    </source>
</evidence>
<evidence type="ECO:0000305" key="3"/>
<accession>Q4R3B7</accession>
<gene>
    <name type="primary">SLFNL1</name>
    <name type="ORF">QtsA-18087</name>
</gene>
<protein>
    <recommendedName>
        <fullName>Schlafen-like protein 1</fullName>
    </recommendedName>
</protein>
<dbReference type="EMBL" id="AB179349">
    <property type="protein sequence ID" value="BAE02400.1"/>
    <property type="molecule type" value="mRNA"/>
</dbReference>
<dbReference type="RefSeq" id="NP_001271955.1">
    <property type="nucleotide sequence ID" value="NM_001285026.1"/>
</dbReference>
<dbReference type="STRING" id="9541.ENSMFAP00000028881"/>
<dbReference type="eggNOG" id="ENOG502QTT1">
    <property type="taxonomic scope" value="Eukaryota"/>
</dbReference>
<dbReference type="Proteomes" id="UP000233100">
    <property type="component" value="Unplaced"/>
</dbReference>
<dbReference type="GO" id="GO:0005524">
    <property type="term" value="F:ATP binding"/>
    <property type="evidence" value="ECO:0007669"/>
    <property type="project" value="UniProtKB-KW"/>
</dbReference>
<dbReference type="Gene3D" id="3.30.950.30">
    <property type="entry name" value="Schlafen, AAA domain"/>
    <property type="match status" value="1"/>
</dbReference>
<dbReference type="InterPro" id="IPR029684">
    <property type="entry name" value="Schlafen"/>
</dbReference>
<dbReference type="InterPro" id="IPR007421">
    <property type="entry name" value="Schlafen_AlbA_2_dom"/>
</dbReference>
<dbReference type="InterPro" id="IPR038461">
    <property type="entry name" value="Schlafen_AlbA_2_dom_sf"/>
</dbReference>
<dbReference type="PANTHER" id="PTHR12155">
    <property type="entry name" value="SCHLAFEN"/>
    <property type="match status" value="1"/>
</dbReference>
<dbReference type="PANTHER" id="PTHR12155:SF29">
    <property type="entry name" value="SCHLAFEN-LIKE PROTEIN 1"/>
    <property type="match status" value="1"/>
</dbReference>
<dbReference type="Pfam" id="PF04326">
    <property type="entry name" value="SLFN_AlbA_2"/>
    <property type="match status" value="1"/>
</dbReference>
<proteinExistence type="evidence at transcript level"/>
<comment type="similarity">
    <text evidence="3">Belongs to the Schlafen family. Subgroup I subfamily.</text>
</comment>
<sequence length="404" mass="45333">MTPMKRSVQTQVSEPFTESWGEESLPELPTEQSLTEYSDLKEAPSAHTLYVGHLNPQFSVPVLACLLRDTLERLEMPVAREHIEVVRRPRKAYALVQVTVRRDTLASLPWRLQTALEEHLILKELAARGKELLLSEAQGPLSHREEEEEDSGLSPGPNPGSGVPLPAWPTHTLPDRPQAWQLQSCQGRPSGVCSDSAIVHHEIVGKDQLFQGAFLGSETRNMEFKRGSGEYLSLAFKHHVRRYVCAFLNSEGGSLLVGVEDSGLVRGIRCSHRDEDRARLLVDSILQGFKPQVFPDAYTLTFVPVISTSETNVPLKVIRLTVHTPKAQSQPQLYQTDQGEVFLRRDGSIQGPLSASAIQEWCRQRWLVELGKLEERVKVLTMEKEQLQQQLQQHGPMSCTCCVL</sequence>
<feature type="chain" id="PRO_0000282999" description="Schlafen-like protein 1">
    <location>
        <begin position="1"/>
        <end position="404"/>
    </location>
</feature>
<feature type="region of interest" description="Disordered" evidence="2">
    <location>
        <begin position="1"/>
        <end position="31"/>
    </location>
</feature>
<feature type="region of interest" description="Disordered" evidence="2">
    <location>
        <begin position="139"/>
        <end position="170"/>
    </location>
</feature>
<feature type="coiled-coil region" evidence="1">
    <location>
        <begin position="365"/>
        <end position="395"/>
    </location>
</feature>
<feature type="compositionally biased region" description="Polar residues" evidence="2">
    <location>
        <begin position="7"/>
        <end position="16"/>
    </location>
</feature>
<feature type="compositionally biased region" description="Low complexity" evidence="2">
    <location>
        <begin position="152"/>
        <end position="165"/>
    </location>
</feature>
<feature type="binding site" evidence="1">
    <location>
        <begin position="258"/>
        <end position="265"/>
    </location>
    <ligand>
        <name>ATP</name>
        <dbReference type="ChEBI" id="CHEBI:30616"/>
    </ligand>
</feature>
<name>SLNL1_MACFA</name>
<organism>
    <name type="scientific">Macaca fascicularis</name>
    <name type="common">Crab-eating macaque</name>
    <name type="synonym">Cynomolgus monkey</name>
    <dbReference type="NCBI Taxonomy" id="9541"/>
    <lineage>
        <taxon>Eukaryota</taxon>
        <taxon>Metazoa</taxon>
        <taxon>Chordata</taxon>
        <taxon>Craniata</taxon>
        <taxon>Vertebrata</taxon>
        <taxon>Euteleostomi</taxon>
        <taxon>Mammalia</taxon>
        <taxon>Eutheria</taxon>
        <taxon>Euarchontoglires</taxon>
        <taxon>Primates</taxon>
        <taxon>Haplorrhini</taxon>
        <taxon>Catarrhini</taxon>
        <taxon>Cercopithecidae</taxon>
        <taxon>Cercopithecinae</taxon>
        <taxon>Macaca</taxon>
    </lineage>
</organism>
<keyword id="KW-0067">ATP-binding</keyword>
<keyword id="KW-0175">Coiled coil</keyword>
<keyword id="KW-0547">Nucleotide-binding</keyword>
<keyword id="KW-1185">Reference proteome</keyword>